<accession>O93366</accession>
<keyword id="KW-0217">Developmental protein</keyword>
<keyword id="KW-0238">DNA-binding</keyword>
<keyword id="KW-0371">Homeobox</keyword>
<keyword id="KW-0539">Nucleus</keyword>
<keyword id="KW-1185">Reference proteome</keyword>
<proteinExistence type="evidence at transcript level"/>
<name>TLX1_CHICK</name>
<feature type="chain" id="PRO_0000049335" description="T-cell leukemia homeobox protein 1">
    <location>
        <begin position="1"/>
        <end position="297"/>
    </location>
</feature>
<feature type="DNA-binding region" description="Homeobox" evidence="1">
    <location>
        <begin position="168"/>
        <end position="227"/>
    </location>
</feature>
<feature type="region of interest" description="Disordered" evidence="2">
    <location>
        <begin position="153"/>
        <end position="174"/>
    </location>
</feature>
<comment type="function">
    <text>Seems to be involved in the development of cranial sensory innervation from peripheral ganglia.</text>
</comment>
<comment type="subcellular location">
    <subcellularLocation>
        <location evidence="1">Nucleus</location>
    </subcellularLocation>
</comment>
<sequence length="297" mass="32426">MEHLGAHHLHQGQAEPISFGIDQILNTSEPGSCMVSHPRLQDSADYGLGCIVGSAYNTVTGGYGASGGGAGAYGGTSCSMGALPGSYNVNMAVSMNGNALSSAGGVIRVPAHRPVAGGVHQPLSAAVPPVNGMNSLTGLTFPWMESNRRYTKDRFTGHPYQNRTPPKKKKPRTSFTRLQICELEKRFHRQKYLASAERAALAKALKMTDAQVKTWFQNRRTKWRRQTAEEREAERQQANRILMQLQQEAFQKTINQPIQADPICVHNSSLFALQNLQPWSDDSTKITSVTTVASACE</sequence>
<organism>
    <name type="scientific">Gallus gallus</name>
    <name type="common">Chicken</name>
    <dbReference type="NCBI Taxonomy" id="9031"/>
    <lineage>
        <taxon>Eukaryota</taxon>
        <taxon>Metazoa</taxon>
        <taxon>Chordata</taxon>
        <taxon>Craniata</taxon>
        <taxon>Vertebrata</taxon>
        <taxon>Euteleostomi</taxon>
        <taxon>Archelosauria</taxon>
        <taxon>Archosauria</taxon>
        <taxon>Dinosauria</taxon>
        <taxon>Saurischia</taxon>
        <taxon>Theropoda</taxon>
        <taxon>Coelurosauria</taxon>
        <taxon>Aves</taxon>
        <taxon>Neognathae</taxon>
        <taxon>Galloanserae</taxon>
        <taxon>Galliformes</taxon>
        <taxon>Phasianidae</taxon>
        <taxon>Phasianinae</taxon>
        <taxon>Gallus</taxon>
    </lineage>
</organism>
<reference key="1">
    <citation type="journal article" date="1998" name="J. Neurosci.">
        <title>Tlx-1 and Tlx-3 homeobox gene expression in cranial sensory ganglia and hindbrain of the chick embryo: markers of patterned connectivity.</title>
        <authorList>
            <person name="Logan C.C."/>
            <person name="Wingate R.J.T."/>
            <person name="McKay I.J."/>
            <person name="Lumsden A."/>
        </authorList>
    </citation>
    <scope>NUCLEOTIDE SEQUENCE [MRNA]</scope>
    <source>
        <strain>Rhode Island red</strain>
    </source>
</reference>
<protein>
    <recommendedName>
        <fullName>T-cell leukemia homeobox protein 1</fullName>
    </recommendedName>
    <alternativeName>
        <fullName>Homeobox TLX-1</fullName>
    </alternativeName>
    <alternativeName>
        <fullName>Homeobox protein Hox-11</fullName>
    </alternativeName>
</protein>
<evidence type="ECO:0000255" key="1">
    <source>
        <dbReference type="PROSITE-ProRule" id="PRU00108"/>
    </source>
</evidence>
<evidence type="ECO:0000256" key="2">
    <source>
        <dbReference type="SAM" id="MobiDB-lite"/>
    </source>
</evidence>
<dbReference type="EMBL" id="AF071874">
    <property type="protein sequence ID" value="AAC23900.1"/>
    <property type="molecule type" value="mRNA"/>
</dbReference>
<dbReference type="RefSeq" id="NP_990346.1">
    <property type="nucleotide sequence ID" value="NM_205015.2"/>
</dbReference>
<dbReference type="SMR" id="O93366"/>
<dbReference type="FunCoup" id="O93366">
    <property type="interactions" value="128"/>
</dbReference>
<dbReference type="STRING" id="9031.ENSGALP00000012693"/>
<dbReference type="PaxDb" id="9031-ENSGALP00000012693"/>
<dbReference type="GeneID" id="395868"/>
<dbReference type="KEGG" id="gga:395868"/>
<dbReference type="CTD" id="3195"/>
<dbReference type="VEuPathDB" id="HostDB:geneid_395868"/>
<dbReference type="eggNOG" id="KOG0488">
    <property type="taxonomic scope" value="Eukaryota"/>
</dbReference>
<dbReference type="HOGENOM" id="CLU_053409_3_0_1"/>
<dbReference type="InParanoid" id="O93366"/>
<dbReference type="OrthoDB" id="9451579at2759"/>
<dbReference type="PhylomeDB" id="O93366"/>
<dbReference type="PRO" id="PR:O93366"/>
<dbReference type="Proteomes" id="UP000000539">
    <property type="component" value="Chromosome 6"/>
</dbReference>
<dbReference type="Bgee" id="ENSGALG00000007831">
    <property type="expression patterns" value="Expressed in spleen and 3 other cell types or tissues"/>
</dbReference>
<dbReference type="GO" id="GO:0005634">
    <property type="term" value="C:nucleus"/>
    <property type="evidence" value="ECO:0000318"/>
    <property type="project" value="GO_Central"/>
</dbReference>
<dbReference type="GO" id="GO:0003677">
    <property type="term" value="F:DNA binding"/>
    <property type="evidence" value="ECO:0007669"/>
    <property type="project" value="UniProtKB-KW"/>
</dbReference>
<dbReference type="GO" id="GO:0000981">
    <property type="term" value="F:DNA-binding transcription factor activity, RNA polymerase II-specific"/>
    <property type="evidence" value="ECO:0000318"/>
    <property type="project" value="GO_Central"/>
</dbReference>
<dbReference type="GO" id="GO:0048513">
    <property type="term" value="P:animal organ development"/>
    <property type="evidence" value="ECO:0000318"/>
    <property type="project" value="GO_Central"/>
</dbReference>
<dbReference type="GO" id="GO:0006357">
    <property type="term" value="P:regulation of transcription by RNA polymerase II"/>
    <property type="evidence" value="ECO:0000318"/>
    <property type="project" value="GO_Central"/>
</dbReference>
<dbReference type="CDD" id="cd00086">
    <property type="entry name" value="homeodomain"/>
    <property type="match status" value="1"/>
</dbReference>
<dbReference type="FunFam" id="1.10.10.60:FF:000040">
    <property type="entry name" value="T-cell leukemia homeobox protein 3"/>
    <property type="match status" value="1"/>
</dbReference>
<dbReference type="Gene3D" id="1.10.10.60">
    <property type="entry name" value="Homeodomain-like"/>
    <property type="match status" value="1"/>
</dbReference>
<dbReference type="InterPro" id="IPR001356">
    <property type="entry name" value="HD"/>
</dbReference>
<dbReference type="InterPro" id="IPR020479">
    <property type="entry name" value="HD_metazoa"/>
</dbReference>
<dbReference type="InterPro" id="IPR017970">
    <property type="entry name" value="Homeobox_CS"/>
</dbReference>
<dbReference type="InterPro" id="IPR009057">
    <property type="entry name" value="Homeodomain-like_sf"/>
</dbReference>
<dbReference type="InterPro" id="IPR042247">
    <property type="entry name" value="TLX1/2/3"/>
</dbReference>
<dbReference type="PANTHER" id="PTHR45921">
    <property type="entry name" value="IP01054P"/>
    <property type="match status" value="1"/>
</dbReference>
<dbReference type="PANTHER" id="PTHR45921:SF2">
    <property type="entry name" value="T-CELL LEUKEMIA HOMEOBOX PROTEIN 1"/>
    <property type="match status" value="1"/>
</dbReference>
<dbReference type="Pfam" id="PF00046">
    <property type="entry name" value="Homeodomain"/>
    <property type="match status" value="1"/>
</dbReference>
<dbReference type="PRINTS" id="PR00024">
    <property type="entry name" value="HOMEOBOX"/>
</dbReference>
<dbReference type="SMART" id="SM00389">
    <property type="entry name" value="HOX"/>
    <property type="match status" value="1"/>
</dbReference>
<dbReference type="SUPFAM" id="SSF46689">
    <property type="entry name" value="Homeodomain-like"/>
    <property type="match status" value="1"/>
</dbReference>
<dbReference type="PROSITE" id="PS00027">
    <property type="entry name" value="HOMEOBOX_1"/>
    <property type="match status" value="1"/>
</dbReference>
<dbReference type="PROSITE" id="PS50071">
    <property type="entry name" value="HOMEOBOX_2"/>
    <property type="match status" value="1"/>
</dbReference>
<gene>
    <name type="primary">TLX1</name>
    <name type="synonym">HOX11</name>
</gene>